<protein>
    <recommendedName>
        <fullName evidence="1">3-isopropylmalate dehydratase large subunit</fullName>
        <ecNumber evidence="1">4.2.1.33</ecNumber>
    </recommendedName>
    <alternativeName>
        <fullName evidence="1">Alpha-IPM isomerase</fullName>
        <shortName evidence="1">IPMI</shortName>
    </alternativeName>
    <alternativeName>
        <fullName evidence="1">Isopropylmalate isomerase</fullName>
    </alternativeName>
</protein>
<sequence>MGKTLYEKVYDAHVAVAAEGENPILYIDRHLVHEVTSPQAFDGLREKGRKVRQVSKTFATMDHNVSTTTKDINASGEMARIQMETLSKNCEEFGVTLYDINHKYQGIVHVMGPELGITLPGMTIVCGDSHTATHGAFGSLAFGIGTSEVEHVLATQTLKQARAKTMKIEVKGKVAPGITAKDIVLAIIGETTAAGGTGYVVEFCGEAITDLSMEGRMTVCNMAIELGAKAGLIAPDETTFEYIKGRKFSPQGSDFDAAVEYWKTLKTDDEAQFDAVVTLNAADIKPQVTWGTNPGQVIAVDQPIPAPESFADPVEKASAEKALAYMGLEAGKSLSDYNVDKVFVGSCTNSRIEDMRAAAEIAKGRKVASHVQALIVPGSEQVKAQAEAEGLDVIFKEAGFEWRLPGCSMCLAMNNDRLGPHERCASTSNRNFEGRQGRDGRTHLVSPAMAAAAAIAGHFVDIRELD</sequence>
<feature type="chain" id="PRO_1000063631" description="3-isopropylmalate dehydratase large subunit">
    <location>
        <begin position="1"/>
        <end position="466"/>
    </location>
</feature>
<feature type="binding site" evidence="1">
    <location>
        <position position="347"/>
    </location>
    <ligand>
        <name>[4Fe-4S] cluster</name>
        <dbReference type="ChEBI" id="CHEBI:49883"/>
    </ligand>
</feature>
<feature type="binding site" evidence="1">
    <location>
        <position position="407"/>
    </location>
    <ligand>
        <name>[4Fe-4S] cluster</name>
        <dbReference type="ChEBI" id="CHEBI:49883"/>
    </ligand>
</feature>
<feature type="binding site" evidence="1">
    <location>
        <position position="410"/>
    </location>
    <ligand>
        <name>[4Fe-4S] cluster</name>
        <dbReference type="ChEBI" id="CHEBI:49883"/>
    </ligand>
</feature>
<reference key="1">
    <citation type="submission" date="2007-08" db="EMBL/GenBank/DDBJ databases">
        <authorList>
            <consortium name="The Vibrio harveyi Genome Sequencing Project"/>
            <person name="Bassler B."/>
            <person name="Clifton S.W."/>
            <person name="Fulton L."/>
            <person name="Delehaunty K."/>
            <person name="Fronick C."/>
            <person name="Harrison M."/>
            <person name="Markivic C."/>
            <person name="Fulton R."/>
            <person name="Tin-Wollam A.-M."/>
            <person name="Shah N."/>
            <person name="Pepin K."/>
            <person name="Nash W."/>
            <person name="Thiruvilangam P."/>
            <person name="Bhonagiri V."/>
            <person name="Waters C."/>
            <person name="Tu K.C."/>
            <person name="Irgon J."/>
            <person name="Wilson R.K."/>
        </authorList>
    </citation>
    <scope>NUCLEOTIDE SEQUENCE [LARGE SCALE GENOMIC DNA]</scope>
    <source>
        <strain>ATCC BAA-1116 / BB120</strain>
    </source>
</reference>
<comment type="function">
    <text evidence="1">Catalyzes the isomerization between 2-isopropylmalate and 3-isopropylmalate, via the formation of 2-isopropylmaleate.</text>
</comment>
<comment type="catalytic activity">
    <reaction evidence="1">
        <text>(2R,3S)-3-isopropylmalate = (2S)-2-isopropylmalate</text>
        <dbReference type="Rhea" id="RHEA:32287"/>
        <dbReference type="ChEBI" id="CHEBI:1178"/>
        <dbReference type="ChEBI" id="CHEBI:35121"/>
        <dbReference type="EC" id="4.2.1.33"/>
    </reaction>
</comment>
<comment type="cofactor">
    <cofactor evidence="1">
        <name>[4Fe-4S] cluster</name>
        <dbReference type="ChEBI" id="CHEBI:49883"/>
    </cofactor>
    <text evidence="1">Binds 1 [4Fe-4S] cluster per subunit.</text>
</comment>
<comment type="pathway">
    <text evidence="1">Amino-acid biosynthesis; L-leucine biosynthesis; L-leucine from 3-methyl-2-oxobutanoate: step 2/4.</text>
</comment>
<comment type="subunit">
    <text evidence="1">Heterodimer of LeuC and LeuD.</text>
</comment>
<comment type="similarity">
    <text evidence="1">Belongs to the aconitase/IPM isomerase family. LeuC type 1 subfamily.</text>
</comment>
<gene>
    <name evidence="1" type="primary">leuC</name>
    <name type="ordered locus">VIBHAR_00815</name>
</gene>
<keyword id="KW-0004">4Fe-4S</keyword>
<keyword id="KW-0028">Amino-acid biosynthesis</keyword>
<keyword id="KW-0100">Branched-chain amino acid biosynthesis</keyword>
<keyword id="KW-0408">Iron</keyword>
<keyword id="KW-0411">Iron-sulfur</keyword>
<keyword id="KW-0432">Leucine biosynthesis</keyword>
<keyword id="KW-0456">Lyase</keyword>
<keyword id="KW-0479">Metal-binding</keyword>
<accession>A7MWC3</accession>
<evidence type="ECO:0000255" key="1">
    <source>
        <dbReference type="HAMAP-Rule" id="MF_01026"/>
    </source>
</evidence>
<proteinExistence type="inferred from homology"/>
<dbReference type="EC" id="4.2.1.33" evidence="1"/>
<dbReference type="EMBL" id="CP000789">
    <property type="protein sequence ID" value="ABU69816.1"/>
    <property type="molecule type" value="Genomic_DNA"/>
</dbReference>
<dbReference type="RefSeq" id="WP_012126924.1">
    <property type="nucleotide sequence ID" value="NC_022269.1"/>
</dbReference>
<dbReference type="SMR" id="A7MWC3"/>
<dbReference type="KEGG" id="vha:VIBHAR_00815"/>
<dbReference type="PATRIC" id="fig|338187.25.peg.1800"/>
<dbReference type="UniPathway" id="UPA00048">
    <property type="reaction ID" value="UER00071"/>
</dbReference>
<dbReference type="Proteomes" id="UP000008152">
    <property type="component" value="Chromosome I"/>
</dbReference>
<dbReference type="GO" id="GO:0003861">
    <property type="term" value="F:3-isopropylmalate dehydratase activity"/>
    <property type="evidence" value="ECO:0007669"/>
    <property type="project" value="UniProtKB-UniRule"/>
</dbReference>
<dbReference type="GO" id="GO:0051539">
    <property type="term" value="F:4 iron, 4 sulfur cluster binding"/>
    <property type="evidence" value="ECO:0007669"/>
    <property type="project" value="UniProtKB-KW"/>
</dbReference>
<dbReference type="GO" id="GO:0046872">
    <property type="term" value="F:metal ion binding"/>
    <property type="evidence" value="ECO:0007669"/>
    <property type="project" value="UniProtKB-KW"/>
</dbReference>
<dbReference type="GO" id="GO:0009098">
    <property type="term" value="P:L-leucine biosynthetic process"/>
    <property type="evidence" value="ECO:0007669"/>
    <property type="project" value="UniProtKB-UniRule"/>
</dbReference>
<dbReference type="CDD" id="cd01583">
    <property type="entry name" value="IPMI"/>
    <property type="match status" value="1"/>
</dbReference>
<dbReference type="FunFam" id="3.30.499.10:FF:000006">
    <property type="entry name" value="3-isopropylmalate dehydratase large subunit"/>
    <property type="match status" value="1"/>
</dbReference>
<dbReference type="FunFam" id="3.30.499.10:FF:000007">
    <property type="entry name" value="3-isopropylmalate dehydratase large subunit"/>
    <property type="match status" value="1"/>
</dbReference>
<dbReference type="Gene3D" id="3.30.499.10">
    <property type="entry name" value="Aconitase, domain 3"/>
    <property type="match status" value="2"/>
</dbReference>
<dbReference type="HAMAP" id="MF_01026">
    <property type="entry name" value="LeuC_type1"/>
    <property type="match status" value="1"/>
</dbReference>
<dbReference type="InterPro" id="IPR004430">
    <property type="entry name" value="3-IsopropMal_deHydase_lsu"/>
</dbReference>
<dbReference type="InterPro" id="IPR015931">
    <property type="entry name" value="Acnase/IPM_dHydase_lsu_aba_1/3"/>
</dbReference>
<dbReference type="InterPro" id="IPR001030">
    <property type="entry name" value="Acoase/IPM_deHydtase_lsu_aba"/>
</dbReference>
<dbReference type="InterPro" id="IPR018136">
    <property type="entry name" value="Aconitase_4Fe-4S_BS"/>
</dbReference>
<dbReference type="InterPro" id="IPR036008">
    <property type="entry name" value="Aconitase_4Fe-4S_dom"/>
</dbReference>
<dbReference type="InterPro" id="IPR050067">
    <property type="entry name" value="IPM_dehydratase_rel_enz"/>
</dbReference>
<dbReference type="InterPro" id="IPR033941">
    <property type="entry name" value="IPMI_cat"/>
</dbReference>
<dbReference type="NCBIfam" id="TIGR00170">
    <property type="entry name" value="leuC"/>
    <property type="match status" value="1"/>
</dbReference>
<dbReference type="NCBIfam" id="NF004016">
    <property type="entry name" value="PRK05478.1"/>
    <property type="match status" value="1"/>
</dbReference>
<dbReference type="NCBIfam" id="NF009116">
    <property type="entry name" value="PRK12466.1"/>
    <property type="match status" value="1"/>
</dbReference>
<dbReference type="PANTHER" id="PTHR43822:SF9">
    <property type="entry name" value="3-ISOPROPYLMALATE DEHYDRATASE"/>
    <property type="match status" value="1"/>
</dbReference>
<dbReference type="PANTHER" id="PTHR43822">
    <property type="entry name" value="HOMOACONITASE, MITOCHONDRIAL-RELATED"/>
    <property type="match status" value="1"/>
</dbReference>
<dbReference type="Pfam" id="PF00330">
    <property type="entry name" value="Aconitase"/>
    <property type="match status" value="1"/>
</dbReference>
<dbReference type="PRINTS" id="PR00415">
    <property type="entry name" value="ACONITASE"/>
</dbReference>
<dbReference type="SUPFAM" id="SSF53732">
    <property type="entry name" value="Aconitase iron-sulfur domain"/>
    <property type="match status" value="1"/>
</dbReference>
<dbReference type="PROSITE" id="PS00450">
    <property type="entry name" value="ACONITASE_1"/>
    <property type="match status" value="1"/>
</dbReference>
<dbReference type="PROSITE" id="PS01244">
    <property type="entry name" value="ACONITASE_2"/>
    <property type="match status" value="1"/>
</dbReference>
<name>LEUC_VIBC1</name>
<organism>
    <name type="scientific">Vibrio campbellii (strain ATCC BAA-1116)</name>
    <dbReference type="NCBI Taxonomy" id="2902295"/>
    <lineage>
        <taxon>Bacteria</taxon>
        <taxon>Pseudomonadati</taxon>
        <taxon>Pseudomonadota</taxon>
        <taxon>Gammaproteobacteria</taxon>
        <taxon>Vibrionales</taxon>
        <taxon>Vibrionaceae</taxon>
        <taxon>Vibrio</taxon>
    </lineage>
</organism>